<name>HTRA1_RAT</name>
<gene>
    <name type="primary">Htra1</name>
    <name type="synonym">Htra</name>
    <name type="synonym">Prss11</name>
</gene>
<dbReference type="EC" id="3.4.21.-"/>
<dbReference type="EMBL" id="AF179370">
    <property type="protein sequence ID" value="AAD52683.1"/>
    <property type="molecule type" value="mRNA"/>
</dbReference>
<dbReference type="EMBL" id="CH473956">
    <property type="protein sequence ID" value="EDM17131.1"/>
    <property type="molecule type" value="Genomic_DNA"/>
</dbReference>
<dbReference type="EMBL" id="BC081767">
    <property type="protein sequence ID" value="AAH81767.1"/>
    <property type="molecule type" value="mRNA"/>
</dbReference>
<dbReference type="RefSeq" id="NP_113909.1">
    <property type="nucleotide sequence ID" value="NM_031721.1"/>
</dbReference>
<dbReference type="SMR" id="Q9QZK5"/>
<dbReference type="BioGRID" id="249278">
    <property type="interactions" value="1"/>
</dbReference>
<dbReference type="FunCoup" id="Q9QZK5">
    <property type="interactions" value="112"/>
</dbReference>
<dbReference type="IntAct" id="Q9QZK5">
    <property type="interactions" value="3"/>
</dbReference>
<dbReference type="STRING" id="10116.ENSRNOP00000027860"/>
<dbReference type="MEROPS" id="S01.277"/>
<dbReference type="PhosphoSitePlus" id="Q9QZK5"/>
<dbReference type="PaxDb" id="10116-ENSRNOP00000027860"/>
<dbReference type="GeneID" id="65164"/>
<dbReference type="KEGG" id="rno:65164"/>
<dbReference type="UCSC" id="RGD:69235">
    <property type="organism name" value="rat"/>
</dbReference>
<dbReference type="AGR" id="RGD:69235"/>
<dbReference type="CTD" id="5654"/>
<dbReference type="RGD" id="69235">
    <property type="gene designation" value="Htra1"/>
</dbReference>
<dbReference type="VEuPathDB" id="HostDB:ENSRNOG00000020533"/>
<dbReference type="eggNOG" id="KOG1320">
    <property type="taxonomic scope" value="Eukaryota"/>
</dbReference>
<dbReference type="HOGENOM" id="CLU_020120_6_2_1"/>
<dbReference type="InParanoid" id="Q9QZK5"/>
<dbReference type="OrthoDB" id="47470at9989"/>
<dbReference type="PhylomeDB" id="Q9QZK5"/>
<dbReference type="TreeFam" id="TF323480"/>
<dbReference type="Reactome" id="R-RNO-1474228">
    <property type="pathway name" value="Degradation of the extracellular matrix"/>
</dbReference>
<dbReference type="PRO" id="PR:Q9QZK5"/>
<dbReference type="Proteomes" id="UP000002494">
    <property type="component" value="Chromosome 1"/>
</dbReference>
<dbReference type="Proteomes" id="UP000234681">
    <property type="component" value="Chromosome 1"/>
</dbReference>
<dbReference type="Bgee" id="ENSRNOG00000020533">
    <property type="expression patterns" value="Expressed in ovary and 19 other cell types or tissues"/>
</dbReference>
<dbReference type="GO" id="GO:0062023">
    <property type="term" value="C:collagen-containing extracellular matrix"/>
    <property type="evidence" value="ECO:0000318"/>
    <property type="project" value="GO_Central"/>
</dbReference>
<dbReference type="GO" id="GO:0005829">
    <property type="term" value="C:cytosol"/>
    <property type="evidence" value="ECO:0007669"/>
    <property type="project" value="UniProtKB-SubCell"/>
</dbReference>
<dbReference type="GO" id="GO:0005576">
    <property type="term" value="C:extracellular region"/>
    <property type="evidence" value="ECO:0007669"/>
    <property type="project" value="UniProtKB-SubCell"/>
</dbReference>
<dbReference type="GO" id="GO:0005886">
    <property type="term" value="C:plasma membrane"/>
    <property type="evidence" value="ECO:0007669"/>
    <property type="project" value="UniProtKB-SubCell"/>
</dbReference>
<dbReference type="GO" id="GO:0019838">
    <property type="term" value="F:growth factor binding"/>
    <property type="evidence" value="ECO:0007669"/>
    <property type="project" value="UniProtKB-KW"/>
</dbReference>
<dbReference type="GO" id="GO:0042802">
    <property type="term" value="F:identical protein binding"/>
    <property type="evidence" value="ECO:0000266"/>
    <property type="project" value="RGD"/>
</dbReference>
<dbReference type="GO" id="GO:0140677">
    <property type="term" value="F:molecular function activator activity"/>
    <property type="evidence" value="ECO:0000266"/>
    <property type="project" value="RGD"/>
</dbReference>
<dbReference type="GO" id="GO:0004252">
    <property type="term" value="F:serine-type endopeptidase activity"/>
    <property type="evidence" value="ECO:0000318"/>
    <property type="project" value="GO_Central"/>
</dbReference>
<dbReference type="GO" id="GO:0008236">
    <property type="term" value="F:serine-type peptidase activity"/>
    <property type="evidence" value="ECO:0000250"/>
    <property type="project" value="UniProtKB"/>
</dbReference>
<dbReference type="GO" id="GO:0060718">
    <property type="term" value="P:chorionic trophoblast cell differentiation"/>
    <property type="evidence" value="ECO:0000266"/>
    <property type="project" value="RGD"/>
</dbReference>
<dbReference type="GO" id="GO:0097187">
    <property type="term" value="P:dentinogenesis"/>
    <property type="evidence" value="ECO:0000270"/>
    <property type="project" value="RGD"/>
</dbReference>
<dbReference type="GO" id="GO:0030514">
    <property type="term" value="P:negative regulation of BMP signaling pathway"/>
    <property type="evidence" value="ECO:0000266"/>
    <property type="project" value="RGD"/>
</dbReference>
<dbReference type="GO" id="GO:0050687">
    <property type="term" value="P:negative regulation of defense response to virus"/>
    <property type="evidence" value="ECO:0000315"/>
    <property type="project" value="RGD"/>
</dbReference>
<dbReference type="GO" id="GO:0030512">
    <property type="term" value="P:negative regulation of transforming growth factor beta receptor signaling pathway"/>
    <property type="evidence" value="ECO:0000266"/>
    <property type="project" value="RGD"/>
</dbReference>
<dbReference type="GO" id="GO:0001890">
    <property type="term" value="P:placenta development"/>
    <property type="evidence" value="ECO:0000266"/>
    <property type="project" value="RGD"/>
</dbReference>
<dbReference type="GO" id="GO:0043065">
    <property type="term" value="P:positive regulation of apoptotic process"/>
    <property type="evidence" value="ECO:0000318"/>
    <property type="project" value="GO_Central"/>
</dbReference>
<dbReference type="GO" id="GO:0050679">
    <property type="term" value="P:positive regulation of epithelial cell proliferation"/>
    <property type="evidence" value="ECO:0000315"/>
    <property type="project" value="RGD"/>
</dbReference>
<dbReference type="GO" id="GO:0012501">
    <property type="term" value="P:programmed cell death"/>
    <property type="evidence" value="ECO:0000318"/>
    <property type="project" value="GO_Central"/>
</dbReference>
<dbReference type="GO" id="GO:0006508">
    <property type="term" value="P:proteolysis"/>
    <property type="evidence" value="ECO:0000250"/>
    <property type="project" value="UniProtKB"/>
</dbReference>
<dbReference type="CDD" id="cd06785">
    <property type="entry name" value="cpPDZ_HtrA-like"/>
    <property type="match status" value="1"/>
</dbReference>
<dbReference type="CDD" id="cd00104">
    <property type="entry name" value="KAZAL_FS"/>
    <property type="match status" value="1"/>
</dbReference>
<dbReference type="FunFam" id="2.40.10.120:FF:000002">
    <property type="entry name" value="HtrA serine peptidase 3"/>
    <property type="match status" value="1"/>
</dbReference>
<dbReference type="FunFam" id="4.10.40.20:FF:000004">
    <property type="entry name" value="HtrA serine peptidase 3"/>
    <property type="match status" value="1"/>
</dbReference>
<dbReference type="FunFam" id="3.30.60.30:FF:000026">
    <property type="entry name" value="Insulin-like growth factor-binding protein 7"/>
    <property type="match status" value="1"/>
</dbReference>
<dbReference type="FunFam" id="2.30.42.10:FF:000142">
    <property type="entry name" value="Serine protease HTRA1"/>
    <property type="match status" value="1"/>
</dbReference>
<dbReference type="Gene3D" id="2.30.42.10">
    <property type="match status" value="1"/>
</dbReference>
<dbReference type="Gene3D" id="2.40.10.120">
    <property type="match status" value="1"/>
</dbReference>
<dbReference type="Gene3D" id="3.30.60.30">
    <property type="match status" value="1"/>
</dbReference>
<dbReference type="Gene3D" id="4.10.40.20">
    <property type="match status" value="1"/>
</dbReference>
<dbReference type="InterPro" id="IPR009030">
    <property type="entry name" value="Growth_fac_rcpt_cys_sf"/>
</dbReference>
<dbReference type="InterPro" id="IPR000867">
    <property type="entry name" value="IGFBP-like"/>
</dbReference>
<dbReference type="InterPro" id="IPR002350">
    <property type="entry name" value="Kazal_dom"/>
</dbReference>
<dbReference type="InterPro" id="IPR036058">
    <property type="entry name" value="Kazal_dom_sf"/>
</dbReference>
<dbReference type="InterPro" id="IPR001478">
    <property type="entry name" value="PDZ"/>
</dbReference>
<dbReference type="InterPro" id="IPR041489">
    <property type="entry name" value="PDZ_6"/>
</dbReference>
<dbReference type="InterPro" id="IPR036034">
    <property type="entry name" value="PDZ_sf"/>
</dbReference>
<dbReference type="InterPro" id="IPR009003">
    <property type="entry name" value="Peptidase_S1_PA"/>
</dbReference>
<dbReference type="InterPro" id="IPR001940">
    <property type="entry name" value="Peptidase_S1C"/>
</dbReference>
<dbReference type="PANTHER" id="PTHR22939">
    <property type="entry name" value="SERINE PROTEASE FAMILY S1C HTRA-RELATED"/>
    <property type="match status" value="1"/>
</dbReference>
<dbReference type="PANTHER" id="PTHR22939:SF13">
    <property type="entry name" value="SERINE PROTEASE HTRA1"/>
    <property type="match status" value="1"/>
</dbReference>
<dbReference type="Pfam" id="PF00219">
    <property type="entry name" value="IGFBP"/>
    <property type="match status" value="1"/>
</dbReference>
<dbReference type="Pfam" id="PF07648">
    <property type="entry name" value="Kazal_2"/>
    <property type="match status" value="1"/>
</dbReference>
<dbReference type="Pfam" id="PF17820">
    <property type="entry name" value="PDZ_6"/>
    <property type="match status" value="1"/>
</dbReference>
<dbReference type="Pfam" id="PF13365">
    <property type="entry name" value="Trypsin_2"/>
    <property type="match status" value="1"/>
</dbReference>
<dbReference type="PRINTS" id="PR00834">
    <property type="entry name" value="PROTEASES2C"/>
</dbReference>
<dbReference type="SMART" id="SM00121">
    <property type="entry name" value="IB"/>
    <property type="match status" value="1"/>
</dbReference>
<dbReference type="SMART" id="SM00280">
    <property type="entry name" value="KAZAL"/>
    <property type="match status" value="1"/>
</dbReference>
<dbReference type="SMART" id="SM00228">
    <property type="entry name" value="PDZ"/>
    <property type="match status" value="1"/>
</dbReference>
<dbReference type="SUPFAM" id="SSF57184">
    <property type="entry name" value="Growth factor receptor domain"/>
    <property type="match status" value="1"/>
</dbReference>
<dbReference type="SUPFAM" id="SSF100895">
    <property type="entry name" value="Kazal-type serine protease inhibitors"/>
    <property type="match status" value="1"/>
</dbReference>
<dbReference type="SUPFAM" id="SSF50156">
    <property type="entry name" value="PDZ domain-like"/>
    <property type="match status" value="1"/>
</dbReference>
<dbReference type="SUPFAM" id="SSF50494">
    <property type="entry name" value="Trypsin-like serine proteases"/>
    <property type="match status" value="1"/>
</dbReference>
<dbReference type="PROSITE" id="PS51323">
    <property type="entry name" value="IGFBP_N_2"/>
    <property type="match status" value="1"/>
</dbReference>
<dbReference type="PROSITE" id="PS51465">
    <property type="entry name" value="KAZAL_2"/>
    <property type="match status" value="1"/>
</dbReference>
<dbReference type="PROSITE" id="PS50106">
    <property type="entry name" value="PDZ"/>
    <property type="match status" value="1"/>
</dbReference>
<reference key="1">
    <citation type="submission" date="1999-08" db="EMBL/GenBank/DDBJ databases">
        <title>Mouse insulin-like growth factor binding protein 5-directed endopeptidase: structural assessment, evolutionary analysis, ovarian expression, hormonal regulation and cellular localization.</title>
        <authorList>
            <person name="Hourvitz A."/>
            <person name="Hennebold J.D."/>
            <person name="King G."/>
            <person name="Negishi H."/>
            <person name="Erickson G.F."/>
            <person name="Roby J.A."/>
            <person name="Mayo K.E."/>
            <person name="Adashi E.Y."/>
        </authorList>
    </citation>
    <scope>NUCLEOTIDE SEQUENCE [MRNA]</scope>
    <source>
        <strain>Sprague-Dawley</strain>
        <tissue>Ovary</tissue>
    </source>
</reference>
<reference key="2">
    <citation type="submission" date="2005-09" db="EMBL/GenBank/DDBJ databases">
        <authorList>
            <person name="Mural R.J."/>
            <person name="Adams M.D."/>
            <person name="Myers E.W."/>
            <person name="Smith H.O."/>
            <person name="Venter J.C."/>
        </authorList>
    </citation>
    <scope>NUCLEOTIDE SEQUENCE [LARGE SCALE GENOMIC DNA]</scope>
</reference>
<reference key="3">
    <citation type="journal article" date="2004" name="Genome Res.">
        <title>The status, quality, and expansion of the NIH full-length cDNA project: the Mammalian Gene Collection (MGC).</title>
        <authorList>
            <consortium name="The MGC Project Team"/>
        </authorList>
    </citation>
    <scope>NUCLEOTIDE SEQUENCE [LARGE SCALE MRNA]</scope>
    <source>
        <tissue>Lung</tissue>
    </source>
</reference>
<protein>
    <recommendedName>
        <fullName>Serine protease HTRA1</fullName>
        <ecNumber>3.4.21.-</ecNumber>
    </recommendedName>
    <alternativeName>
        <fullName>High-temperature requirement A serine peptidase 1</fullName>
    </alternativeName>
    <alternativeName>
        <fullName>Serine protease 11</fullName>
    </alternativeName>
</protein>
<accession>Q9QZK5</accession>
<comment type="function">
    <text evidence="1">Serine protease with a variety of targets, including extracellular matrix proteins such as fibronectin. HTRA1-generated fibronectin fragments further induce synovial cells to up-regulate MMP1 and MMP3 production. May also degrade proteoglycans, such as aggrecan, decorin and fibromodulin. Through cleavage of proteoglycans, may release soluble FGF-glycosaminoglycan complexes that promote the range and intensity of FGF signals in the extracellular space. Regulates the availability of insulin-like growth factors (IGFs) by cleaving IGF-binding proteins. Inhibits signaling mediated by TGF-beta family members. This activity requires the integrity of the catalytic site, although it is unclear whether TGF-beta proteins are themselves degraded. By acting on TGF-beta signaling, may regulate many physiological processes, including retinal angiogenesis and neuronal survival and maturation during development. Intracellularly, degrades TSC2, leading to the activation of TSC2 downstream targets (By similarity).</text>
</comment>
<comment type="subunit">
    <text evidence="1">Forms homotrimers. In the presence of substrate, may form higher-order multimers in a PDZ-independent manner. Interacts with TGF-beta family members, including BMP4, TGFB1, TGFB2, activin A and GDF5.</text>
</comment>
<comment type="subcellular location">
    <subcellularLocation>
        <location evidence="2">Cell membrane</location>
    </subcellularLocation>
    <subcellularLocation>
        <location evidence="2">Secreted</location>
    </subcellularLocation>
    <subcellularLocation>
        <location evidence="2">Cytoplasm</location>
        <location evidence="2">Cytosol</location>
    </subcellularLocation>
    <text evidence="2">Predominantly secreted. Also found associated with the plasma membrane.</text>
</comment>
<comment type="domain">
    <text evidence="1">The IGFBP N-terminal domain mediates interaction with TSC2 substrate.</text>
</comment>
<comment type="similarity">
    <text evidence="7">Belongs to the peptidase S1C family.</text>
</comment>
<evidence type="ECO:0000250" key="1"/>
<evidence type="ECO:0000250" key="2">
    <source>
        <dbReference type="UniProtKB" id="Q92743"/>
    </source>
</evidence>
<evidence type="ECO:0000255" key="3"/>
<evidence type="ECO:0000255" key="4">
    <source>
        <dbReference type="PROSITE-ProRule" id="PRU00143"/>
    </source>
</evidence>
<evidence type="ECO:0000255" key="5">
    <source>
        <dbReference type="PROSITE-ProRule" id="PRU00653"/>
    </source>
</evidence>
<evidence type="ECO:0000255" key="6">
    <source>
        <dbReference type="PROSITE-ProRule" id="PRU00798"/>
    </source>
</evidence>
<evidence type="ECO:0000305" key="7"/>
<feature type="signal peptide" evidence="3">
    <location>
        <begin position="1"/>
        <end position="22"/>
    </location>
</feature>
<feature type="chain" id="PRO_0000416251" description="Serine protease HTRA1">
    <location>
        <begin position="23"/>
        <end position="480"/>
    </location>
</feature>
<feature type="domain" description="IGFBP N-terminal" evidence="5">
    <location>
        <begin position="33"/>
        <end position="113"/>
    </location>
</feature>
<feature type="domain" description="Kazal-like" evidence="6">
    <location>
        <begin position="98"/>
        <end position="157"/>
    </location>
</feature>
<feature type="domain" description="PDZ" evidence="4">
    <location>
        <begin position="365"/>
        <end position="467"/>
    </location>
</feature>
<feature type="region of interest" description="Serine protease" evidence="1">
    <location>
        <begin position="204"/>
        <end position="364"/>
    </location>
</feature>
<feature type="active site" description="Charge relay system" evidence="2">
    <location>
        <position position="220"/>
    </location>
</feature>
<feature type="active site" description="Charge relay system" evidence="2">
    <location>
        <position position="250"/>
    </location>
</feature>
<feature type="active site" description="Charge relay system" evidence="2">
    <location>
        <position position="328"/>
    </location>
</feature>
<feature type="site" description="Involved in trimer stabilization" evidence="2">
    <location>
        <position position="169"/>
    </location>
</feature>
<feature type="site" description="Involved in trimer stabilization" evidence="2">
    <location>
        <position position="171"/>
    </location>
</feature>
<feature type="site" description="Involved in trimer stabilization" evidence="2">
    <location>
        <position position="278"/>
    </location>
</feature>
<feature type="disulfide bond" evidence="5">
    <location>
        <begin position="37"/>
        <end position="62"/>
    </location>
</feature>
<feature type="disulfide bond" evidence="5">
    <location>
        <begin position="41"/>
        <end position="64"/>
    </location>
</feature>
<feature type="disulfide bond" evidence="5">
    <location>
        <begin position="46"/>
        <end position="65"/>
    </location>
</feature>
<feature type="disulfide bond" evidence="5">
    <location>
        <begin position="53"/>
        <end position="68"/>
    </location>
</feature>
<feature type="disulfide bond" evidence="5">
    <location>
        <begin position="76"/>
        <end position="89"/>
    </location>
</feature>
<feature type="disulfide bond" evidence="5">
    <location>
        <begin position="83"/>
        <end position="110"/>
    </location>
</feature>
<feature type="disulfide bond" evidence="7">
    <location>
        <begin position="112"/>
        <end position="130"/>
    </location>
</feature>
<feature type="disulfide bond" evidence="6">
    <location>
        <begin position="119"/>
        <end position="155"/>
    </location>
</feature>
<proteinExistence type="evidence at transcript level"/>
<sequence length="480" mass="51330">MQFLRTALLSLLLLLLAAPSLALPSGISRSAPAATVCPEHCDPTRCAPPPTDCEGGRVRDACGCCEVCGALEGAVCGLQEGPCGEGLQCVVPFGVPASATVRRRAQAGLCVCASSEPVCGSDAKTYTNLCQLRAASRRSEKLRQPPVIVLQRGACGQGQEDPNSLRHKYNFIADVVEKIAPAVVHIELYRKLPFSKREVPVASGSGFIVSEDGLIVTNAHVVTNKNRVKVELKNGATYEAKIKDVDEKADIALIKIDHQGKLPVLLLGRSSELRPGEFVVAIGSPFSLQNTVTTGIVSTTQRGGKELGLRNSDMDYIQTDAIINYGNSGGPLVNLDGEVIGINTLKVTAGISFAIPSDKIKKFLTESHDRQAKGKTVTKKKYIGIRMMSLTSSKAKELKDRHRDFPDVISGAYIIEVIPDTPAEAGGLKENDVIISINGQSVVTANDVSDVIKKENTLNMVVRRGNEDIVITVVPEEIDP</sequence>
<organism>
    <name type="scientific">Rattus norvegicus</name>
    <name type="common">Rat</name>
    <dbReference type="NCBI Taxonomy" id="10116"/>
    <lineage>
        <taxon>Eukaryota</taxon>
        <taxon>Metazoa</taxon>
        <taxon>Chordata</taxon>
        <taxon>Craniata</taxon>
        <taxon>Vertebrata</taxon>
        <taxon>Euteleostomi</taxon>
        <taxon>Mammalia</taxon>
        <taxon>Eutheria</taxon>
        <taxon>Euarchontoglires</taxon>
        <taxon>Glires</taxon>
        <taxon>Rodentia</taxon>
        <taxon>Myomorpha</taxon>
        <taxon>Muroidea</taxon>
        <taxon>Muridae</taxon>
        <taxon>Murinae</taxon>
        <taxon>Rattus</taxon>
    </lineage>
</organism>
<keyword id="KW-1003">Cell membrane</keyword>
<keyword id="KW-0963">Cytoplasm</keyword>
<keyword id="KW-1015">Disulfide bond</keyword>
<keyword id="KW-0340">Growth factor binding</keyword>
<keyword id="KW-0378">Hydrolase</keyword>
<keyword id="KW-0472">Membrane</keyword>
<keyword id="KW-0645">Protease</keyword>
<keyword id="KW-1185">Reference proteome</keyword>
<keyword id="KW-0964">Secreted</keyword>
<keyword id="KW-0720">Serine protease</keyword>
<keyword id="KW-0732">Signal</keyword>